<keyword id="KW-1185">Reference proteome</keyword>
<keyword id="KW-0677">Repeat</keyword>
<comment type="similarity">
    <text evidence="2">Belongs to the PPR family. P subfamily.</text>
</comment>
<comment type="online information" name="Pentatricopeptide repeat proteins">
    <link uri="https://ppr.plantenergy.uwa.edu.au"/>
</comment>
<name>PP360_ARATH</name>
<evidence type="ECO:0000256" key="1">
    <source>
        <dbReference type="SAM" id="MobiDB-lite"/>
    </source>
</evidence>
<evidence type="ECO:0000305" key="2"/>
<proteinExistence type="evidence at transcript level"/>
<protein>
    <recommendedName>
        <fullName>Pentatricopeptide repeat-containing protein At5g01110</fullName>
    </recommendedName>
</protein>
<gene>
    <name type="ordered locus">At5g01110</name>
    <name type="ORF">F7J8_90</name>
</gene>
<feature type="chain" id="PRO_0000363497" description="Pentatricopeptide repeat-containing protein At5g01110">
    <location>
        <begin position="1"/>
        <end position="729"/>
    </location>
</feature>
<feature type="repeat" description="PPR 1">
    <location>
        <begin position="112"/>
        <end position="147"/>
    </location>
</feature>
<feature type="repeat" description="PPR 2">
    <location>
        <begin position="164"/>
        <end position="198"/>
    </location>
</feature>
<feature type="repeat" description="PPR 3">
    <location>
        <begin position="199"/>
        <end position="233"/>
    </location>
</feature>
<feature type="repeat" description="PPR 4">
    <location>
        <begin position="234"/>
        <end position="268"/>
    </location>
</feature>
<feature type="repeat" description="PPR 5">
    <location>
        <begin position="269"/>
        <end position="303"/>
    </location>
</feature>
<feature type="repeat" description="PPR 6">
    <location>
        <begin position="304"/>
        <end position="338"/>
    </location>
</feature>
<feature type="repeat" description="PPR 7">
    <location>
        <begin position="339"/>
        <end position="373"/>
    </location>
</feature>
<feature type="repeat" description="PPR 8">
    <location>
        <begin position="374"/>
        <end position="408"/>
    </location>
</feature>
<feature type="repeat" description="PPR 9">
    <location>
        <begin position="409"/>
        <end position="443"/>
    </location>
</feature>
<feature type="repeat" description="PPR 10">
    <location>
        <begin position="444"/>
        <end position="478"/>
    </location>
</feature>
<feature type="repeat" description="PPR 11">
    <location>
        <begin position="479"/>
        <end position="513"/>
    </location>
</feature>
<feature type="repeat" description="PPR 12">
    <location>
        <begin position="514"/>
        <end position="548"/>
    </location>
</feature>
<feature type="repeat" description="PPR 13">
    <location>
        <begin position="549"/>
        <end position="583"/>
    </location>
</feature>
<feature type="repeat" description="PPR 14">
    <location>
        <begin position="584"/>
        <end position="618"/>
    </location>
</feature>
<feature type="repeat" description="PPR 15">
    <location>
        <begin position="619"/>
        <end position="649"/>
    </location>
</feature>
<feature type="repeat" description="PPR 16">
    <location>
        <begin position="656"/>
        <end position="690"/>
    </location>
</feature>
<feature type="repeat" description="PPR 17">
    <location>
        <begin position="691"/>
        <end position="725"/>
    </location>
</feature>
<feature type="region of interest" description="Disordered" evidence="1">
    <location>
        <begin position="26"/>
        <end position="45"/>
    </location>
</feature>
<feature type="compositionally biased region" description="Low complexity" evidence="1">
    <location>
        <begin position="27"/>
        <end position="45"/>
    </location>
</feature>
<accession>Q9LFC5</accession>
<sequence>MIVHRIIPSRVKDPLTRFKPLKNLTTSSSPVFEPSSSSSSSSSSASFSVSDSFLVEKICFSLKQGNNNVRNHLIRLNPLAVVEVLYRCRNDLTLGQRFVDQLGFHFPNFKHTSLSLSAMIHILVRSGRLSDAQSCLLRMIRRSGVSRLEIVNSLDSTFSNCGSNDSVFDLLIRTYVQARKLREAHEAFTLLRSKGFTVSIDACNALIGSLVRIGWVELAWGVYQEISRSGVGINVYTLNIMVNALCKDGKMEKVGTFLSQVQEKGVYPDIVTYNTLISAYSSKGLMEEAFELMNAMPGKGFSPGVYTYNTVINGLCKHGKYERAKEVFAEMLRSGLSPDSTTYRSLLMEACKKGDVVETEKVFSDMRSRDVVPDLVCFSSMMSLFTRSGNLDKALMYFNSVKEAGLIPDNVIYTILIQGYCRKGMISVAMNLRNEMLQQGCAMDVVTYNTILHGLCKRKMLGEADKLFNEMTERALFPDSYTLTILIDGHCKLGNLQNAMELFQKMKEKRIRLDVVTYNTLLDGFGKVGDIDTAKEIWADMVSKEILPTPISYSILVNALCSKGHLAEAFRVWDEMISKNIKPTVMICNSMIKGYCRSGNASDGESFLEKMISEGFVPDCISYNTLIYGFVREENMSKAFGLVKKMEEEQGGLVPDVFTYNSILHGFCRQNQMKEAEVVLRKMIERGVNPDRSTYTCMINGFVSQDNLTEAFRIHDEMLQRGFSPDDKF</sequence>
<dbReference type="EMBL" id="AL137189">
    <property type="protein sequence ID" value="CAB69839.1"/>
    <property type="molecule type" value="Genomic_DNA"/>
</dbReference>
<dbReference type="EMBL" id="CP002688">
    <property type="protein sequence ID" value="AED90300.1"/>
    <property type="molecule type" value="Genomic_DNA"/>
</dbReference>
<dbReference type="EMBL" id="BT005783">
    <property type="protein sequence ID" value="AAO64186.1"/>
    <property type="molecule type" value="mRNA"/>
</dbReference>
<dbReference type="EMBL" id="AK228473">
    <property type="protein sequence ID" value="BAF00399.1"/>
    <property type="molecule type" value="mRNA"/>
</dbReference>
<dbReference type="PIR" id="T45951">
    <property type="entry name" value="T45951"/>
</dbReference>
<dbReference type="RefSeq" id="NP_195731.1">
    <property type="nucleotide sequence ID" value="NM_120189.5"/>
</dbReference>
<dbReference type="SMR" id="Q9LFC5"/>
<dbReference type="FunCoup" id="Q9LFC5">
    <property type="interactions" value="15"/>
</dbReference>
<dbReference type="PaxDb" id="3702-AT5G01110.1"/>
<dbReference type="ProteomicsDB" id="249251"/>
<dbReference type="EnsemblPlants" id="AT5G01110.1">
    <property type="protein sequence ID" value="AT5G01110.1"/>
    <property type="gene ID" value="AT5G01110"/>
</dbReference>
<dbReference type="GeneID" id="831824"/>
<dbReference type="Gramene" id="AT5G01110.1">
    <property type="protein sequence ID" value="AT5G01110.1"/>
    <property type="gene ID" value="AT5G01110"/>
</dbReference>
<dbReference type="KEGG" id="ath:AT5G01110"/>
<dbReference type="Araport" id="AT5G01110"/>
<dbReference type="TAIR" id="AT5G01110"/>
<dbReference type="eggNOG" id="KOG4197">
    <property type="taxonomic scope" value="Eukaryota"/>
</dbReference>
<dbReference type="HOGENOM" id="CLU_002706_49_12_1"/>
<dbReference type="InParanoid" id="Q9LFC5"/>
<dbReference type="PhylomeDB" id="Q9LFC5"/>
<dbReference type="PRO" id="PR:Q9LFC5"/>
<dbReference type="Proteomes" id="UP000006548">
    <property type="component" value="Chromosome 5"/>
</dbReference>
<dbReference type="ExpressionAtlas" id="Q9LFC5">
    <property type="expression patterns" value="baseline and differential"/>
</dbReference>
<dbReference type="Gene3D" id="1.25.40.10">
    <property type="entry name" value="Tetratricopeptide repeat domain"/>
    <property type="match status" value="5"/>
</dbReference>
<dbReference type="InterPro" id="IPR051240">
    <property type="entry name" value="Mito_RNA-Proc/Resp"/>
</dbReference>
<dbReference type="InterPro" id="IPR002885">
    <property type="entry name" value="Pentatricopeptide_rpt"/>
</dbReference>
<dbReference type="InterPro" id="IPR011990">
    <property type="entry name" value="TPR-like_helical_dom_sf"/>
</dbReference>
<dbReference type="NCBIfam" id="TIGR00756">
    <property type="entry name" value="PPR"/>
    <property type="match status" value="15"/>
</dbReference>
<dbReference type="PANTHER" id="PTHR47933:SF45">
    <property type="entry name" value="PENTACOTRIPEPTIDE-REPEAT REGION OF PRORP DOMAIN-CONTAINING PROTEIN"/>
    <property type="match status" value="1"/>
</dbReference>
<dbReference type="PANTHER" id="PTHR47933">
    <property type="entry name" value="PENTATRICOPEPTIDE REPEAT-CONTAINING PROTEIN 1, MITOCHONDRIAL"/>
    <property type="match status" value="1"/>
</dbReference>
<dbReference type="Pfam" id="PF01535">
    <property type="entry name" value="PPR"/>
    <property type="match status" value="2"/>
</dbReference>
<dbReference type="Pfam" id="PF12854">
    <property type="entry name" value="PPR_1"/>
    <property type="match status" value="2"/>
</dbReference>
<dbReference type="Pfam" id="PF13041">
    <property type="entry name" value="PPR_2"/>
    <property type="match status" value="6"/>
</dbReference>
<dbReference type="SUPFAM" id="SSF81901">
    <property type="entry name" value="HCP-like"/>
    <property type="match status" value="1"/>
</dbReference>
<dbReference type="SUPFAM" id="SSF48452">
    <property type="entry name" value="TPR-like"/>
    <property type="match status" value="1"/>
</dbReference>
<dbReference type="PROSITE" id="PS51375">
    <property type="entry name" value="PPR"/>
    <property type="match status" value="17"/>
</dbReference>
<reference key="1">
    <citation type="journal article" date="2000" name="Nature">
        <title>Sequence and analysis of chromosome 5 of the plant Arabidopsis thaliana.</title>
        <authorList>
            <person name="Tabata S."/>
            <person name="Kaneko T."/>
            <person name="Nakamura Y."/>
            <person name="Kotani H."/>
            <person name="Kato T."/>
            <person name="Asamizu E."/>
            <person name="Miyajima N."/>
            <person name="Sasamoto S."/>
            <person name="Kimura T."/>
            <person name="Hosouchi T."/>
            <person name="Kawashima K."/>
            <person name="Kohara M."/>
            <person name="Matsumoto M."/>
            <person name="Matsuno A."/>
            <person name="Muraki A."/>
            <person name="Nakayama S."/>
            <person name="Nakazaki N."/>
            <person name="Naruo K."/>
            <person name="Okumura S."/>
            <person name="Shinpo S."/>
            <person name="Takeuchi C."/>
            <person name="Wada T."/>
            <person name="Watanabe A."/>
            <person name="Yamada M."/>
            <person name="Yasuda M."/>
            <person name="Sato S."/>
            <person name="de la Bastide M."/>
            <person name="Huang E."/>
            <person name="Spiegel L."/>
            <person name="Gnoj L."/>
            <person name="O'Shaughnessy A."/>
            <person name="Preston R."/>
            <person name="Habermann K."/>
            <person name="Murray J."/>
            <person name="Johnson D."/>
            <person name="Rohlfing T."/>
            <person name="Nelson J."/>
            <person name="Stoneking T."/>
            <person name="Pepin K."/>
            <person name="Spieth J."/>
            <person name="Sekhon M."/>
            <person name="Armstrong J."/>
            <person name="Becker M."/>
            <person name="Belter E."/>
            <person name="Cordum H."/>
            <person name="Cordes M."/>
            <person name="Courtney L."/>
            <person name="Courtney W."/>
            <person name="Dante M."/>
            <person name="Du H."/>
            <person name="Edwards J."/>
            <person name="Fryman J."/>
            <person name="Haakensen B."/>
            <person name="Lamar E."/>
            <person name="Latreille P."/>
            <person name="Leonard S."/>
            <person name="Meyer R."/>
            <person name="Mulvaney E."/>
            <person name="Ozersky P."/>
            <person name="Riley A."/>
            <person name="Strowmatt C."/>
            <person name="Wagner-McPherson C."/>
            <person name="Wollam A."/>
            <person name="Yoakum M."/>
            <person name="Bell M."/>
            <person name="Dedhia N."/>
            <person name="Parnell L."/>
            <person name="Shah R."/>
            <person name="Rodriguez M."/>
            <person name="Hoon See L."/>
            <person name="Vil D."/>
            <person name="Baker J."/>
            <person name="Kirchoff K."/>
            <person name="Toth K."/>
            <person name="King L."/>
            <person name="Bahret A."/>
            <person name="Miller B."/>
            <person name="Marra M.A."/>
            <person name="Martienssen R."/>
            <person name="McCombie W.R."/>
            <person name="Wilson R.K."/>
            <person name="Murphy G."/>
            <person name="Bancroft I."/>
            <person name="Volckaert G."/>
            <person name="Wambutt R."/>
            <person name="Duesterhoeft A."/>
            <person name="Stiekema W."/>
            <person name="Pohl T."/>
            <person name="Entian K.-D."/>
            <person name="Terryn N."/>
            <person name="Hartley N."/>
            <person name="Bent E."/>
            <person name="Johnson S."/>
            <person name="Langham S.-A."/>
            <person name="McCullagh B."/>
            <person name="Robben J."/>
            <person name="Grymonprez B."/>
            <person name="Zimmermann W."/>
            <person name="Ramsperger U."/>
            <person name="Wedler H."/>
            <person name="Balke K."/>
            <person name="Wedler E."/>
            <person name="Peters S."/>
            <person name="van Staveren M."/>
            <person name="Dirkse W."/>
            <person name="Mooijman P."/>
            <person name="Klein Lankhorst R."/>
            <person name="Weitzenegger T."/>
            <person name="Bothe G."/>
            <person name="Rose M."/>
            <person name="Hauf J."/>
            <person name="Berneiser S."/>
            <person name="Hempel S."/>
            <person name="Feldpausch M."/>
            <person name="Lamberth S."/>
            <person name="Villarroel R."/>
            <person name="Gielen J."/>
            <person name="Ardiles W."/>
            <person name="Bents O."/>
            <person name="Lemcke K."/>
            <person name="Kolesov G."/>
            <person name="Mayer K.F.X."/>
            <person name="Rudd S."/>
            <person name="Schoof H."/>
            <person name="Schueller C."/>
            <person name="Zaccaria P."/>
            <person name="Mewes H.-W."/>
            <person name="Bevan M."/>
            <person name="Fransz P.F."/>
        </authorList>
    </citation>
    <scope>NUCLEOTIDE SEQUENCE [LARGE SCALE GENOMIC DNA]</scope>
    <source>
        <strain>cv. Columbia</strain>
    </source>
</reference>
<reference key="2">
    <citation type="journal article" date="2017" name="Plant J.">
        <title>Araport11: a complete reannotation of the Arabidopsis thaliana reference genome.</title>
        <authorList>
            <person name="Cheng C.Y."/>
            <person name="Krishnakumar V."/>
            <person name="Chan A.P."/>
            <person name="Thibaud-Nissen F."/>
            <person name="Schobel S."/>
            <person name="Town C.D."/>
        </authorList>
    </citation>
    <scope>GENOME REANNOTATION</scope>
    <source>
        <strain>cv. Columbia</strain>
    </source>
</reference>
<reference key="3">
    <citation type="journal article" date="2003" name="Science">
        <title>Empirical analysis of transcriptional activity in the Arabidopsis genome.</title>
        <authorList>
            <person name="Yamada K."/>
            <person name="Lim J."/>
            <person name="Dale J.M."/>
            <person name="Chen H."/>
            <person name="Shinn P."/>
            <person name="Palm C.J."/>
            <person name="Southwick A.M."/>
            <person name="Wu H.C."/>
            <person name="Kim C.J."/>
            <person name="Nguyen M."/>
            <person name="Pham P.K."/>
            <person name="Cheuk R.F."/>
            <person name="Karlin-Newmann G."/>
            <person name="Liu S.X."/>
            <person name="Lam B."/>
            <person name="Sakano H."/>
            <person name="Wu T."/>
            <person name="Yu G."/>
            <person name="Miranda M."/>
            <person name="Quach H.L."/>
            <person name="Tripp M."/>
            <person name="Chang C.H."/>
            <person name="Lee J.M."/>
            <person name="Toriumi M.J."/>
            <person name="Chan M.M."/>
            <person name="Tang C.C."/>
            <person name="Onodera C.S."/>
            <person name="Deng J.M."/>
            <person name="Akiyama K."/>
            <person name="Ansari Y."/>
            <person name="Arakawa T."/>
            <person name="Banh J."/>
            <person name="Banno F."/>
            <person name="Bowser L."/>
            <person name="Brooks S.Y."/>
            <person name="Carninci P."/>
            <person name="Chao Q."/>
            <person name="Choy N."/>
            <person name="Enju A."/>
            <person name="Goldsmith A.D."/>
            <person name="Gurjal M."/>
            <person name="Hansen N.F."/>
            <person name="Hayashizaki Y."/>
            <person name="Johnson-Hopson C."/>
            <person name="Hsuan V.W."/>
            <person name="Iida K."/>
            <person name="Karnes M."/>
            <person name="Khan S."/>
            <person name="Koesema E."/>
            <person name="Ishida J."/>
            <person name="Jiang P.X."/>
            <person name="Jones T."/>
            <person name="Kawai J."/>
            <person name="Kamiya A."/>
            <person name="Meyers C."/>
            <person name="Nakajima M."/>
            <person name="Narusaka M."/>
            <person name="Seki M."/>
            <person name="Sakurai T."/>
            <person name="Satou M."/>
            <person name="Tamse R."/>
            <person name="Vaysberg M."/>
            <person name="Wallender E.K."/>
            <person name="Wong C."/>
            <person name="Yamamura Y."/>
            <person name="Yuan S."/>
            <person name="Shinozaki K."/>
            <person name="Davis R.W."/>
            <person name="Theologis A."/>
            <person name="Ecker J.R."/>
        </authorList>
    </citation>
    <scope>NUCLEOTIDE SEQUENCE [LARGE SCALE MRNA]</scope>
    <source>
        <strain>cv. Columbia</strain>
    </source>
</reference>
<reference key="4">
    <citation type="submission" date="2006-07" db="EMBL/GenBank/DDBJ databases">
        <title>Large-scale analysis of RIKEN Arabidopsis full-length (RAFL) cDNAs.</title>
        <authorList>
            <person name="Totoki Y."/>
            <person name="Seki M."/>
            <person name="Ishida J."/>
            <person name="Nakajima M."/>
            <person name="Enju A."/>
            <person name="Kamiya A."/>
            <person name="Narusaka M."/>
            <person name="Shin-i T."/>
            <person name="Nakagawa M."/>
            <person name="Sakamoto N."/>
            <person name="Oishi K."/>
            <person name="Kohara Y."/>
            <person name="Kobayashi M."/>
            <person name="Toyoda A."/>
            <person name="Sakaki Y."/>
            <person name="Sakurai T."/>
            <person name="Iida K."/>
            <person name="Akiyama K."/>
            <person name="Satou M."/>
            <person name="Toyoda T."/>
            <person name="Konagaya A."/>
            <person name="Carninci P."/>
            <person name="Kawai J."/>
            <person name="Hayashizaki Y."/>
            <person name="Shinozaki K."/>
        </authorList>
    </citation>
    <scope>NUCLEOTIDE SEQUENCE [LARGE SCALE MRNA]</scope>
    <source>
        <strain>cv. Columbia</strain>
    </source>
</reference>
<reference key="5">
    <citation type="journal article" date="2004" name="Plant Cell">
        <title>Genome-wide analysis of Arabidopsis pentatricopeptide repeat proteins reveals their essential role in organelle biogenesis.</title>
        <authorList>
            <person name="Lurin C."/>
            <person name="Andres C."/>
            <person name="Aubourg S."/>
            <person name="Bellaoui M."/>
            <person name="Bitton F."/>
            <person name="Bruyere C."/>
            <person name="Caboche M."/>
            <person name="Debast C."/>
            <person name="Gualberto J."/>
            <person name="Hoffmann B."/>
            <person name="Lecharny A."/>
            <person name="Le Ret M."/>
            <person name="Martin-Magniette M.-L."/>
            <person name="Mireau H."/>
            <person name="Peeters N."/>
            <person name="Renou J.-P."/>
            <person name="Szurek B."/>
            <person name="Taconnat L."/>
            <person name="Small I."/>
        </authorList>
    </citation>
    <scope>GENE FAMILY</scope>
</reference>
<organism>
    <name type="scientific">Arabidopsis thaliana</name>
    <name type="common">Mouse-ear cress</name>
    <dbReference type="NCBI Taxonomy" id="3702"/>
    <lineage>
        <taxon>Eukaryota</taxon>
        <taxon>Viridiplantae</taxon>
        <taxon>Streptophyta</taxon>
        <taxon>Embryophyta</taxon>
        <taxon>Tracheophyta</taxon>
        <taxon>Spermatophyta</taxon>
        <taxon>Magnoliopsida</taxon>
        <taxon>eudicotyledons</taxon>
        <taxon>Gunneridae</taxon>
        <taxon>Pentapetalae</taxon>
        <taxon>rosids</taxon>
        <taxon>malvids</taxon>
        <taxon>Brassicales</taxon>
        <taxon>Brassicaceae</taxon>
        <taxon>Camelineae</taxon>
        <taxon>Arabidopsis</taxon>
    </lineage>
</organism>